<sequence>MSNTKIRVRFCPSPTGTPHVGLIRTALFNWAYARHCGGDFVFRIEDTDAGRDSEESYLAILDALRWLGLDWDEGPEVGGPYEPYRQSQRKELHREVVRKLLEAGEAYEAFSTAEEVEARHLAAGRNPKLGYDNYDRDLTEEQRAAFRAEGRDPVVRLRMPDHDITWNDLVRGETTFAAGVVPDFALTRGNGDPLYTLVNPVDDALMKITHVLRGEDLLPSTPRQIALYEAMIRIGVTDSIPAFAHLPSVLGEGTKKLSKRDPQSNLFLHRDRGFIPEGLLNYLALLGWSIADDHDIFSLAEMVTAFDVTDVNSNPARFDQKKADAINAEHIRLLAPEEFVTRLRTYFAAHGHELGLDESAFAVAADLVQTRIVVLGDAWGLLKFLNDDAYAIDPGAARKELGEASLPVLDAAIGALESLEAWTTPAIEGALKSALIEGLELKPRKAFGPLRVAVTGATVSPPLFESMELLGSGRTLTRLRNARSWENGVGDQTDSG</sequence>
<feature type="chain" id="PRO_1000090091" description="Glutamate--tRNA ligase">
    <location>
        <begin position="1"/>
        <end position="496"/>
    </location>
</feature>
<feature type="short sequence motif" description="'HIGH' region" evidence="1">
    <location>
        <begin position="12"/>
        <end position="22"/>
    </location>
</feature>
<feature type="short sequence motif" description="'KMSKS' region" evidence="1">
    <location>
        <begin position="256"/>
        <end position="260"/>
    </location>
</feature>
<feature type="binding site" evidence="1">
    <location>
        <position position="259"/>
    </location>
    <ligand>
        <name>ATP</name>
        <dbReference type="ChEBI" id="CHEBI:30616"/>
    </ligand>
</feature>
<keyword id="KW-0030">Aminoacyl-tRNA synthetase</keyword>
<keyword id="KW-0067">ATP-binding</keyword>
<keyword id="KW-0963">Cytoplasm</keyword>
<keyword id="KW-0436">Ligase</keyword>
<keyword id="KW-0547">Nucleotide-binding</keyword>
<keyword id="KW-0648">Protein biosynthesis</keyword>
<keyword id="KW-1185">Reference proteome</keyword>
<proteinExistence type="inferred from homology"/>
<organism>
    <name type="scientific">Mycobacteroides abscessus (strain ATCC 19977 / DSM 44196 / CCUG 20993 / CIP 104536 / JCM 13569 / NCTC 13031 / TMC 1543 / L948)</name>
    <name type="common">Mycobacterium abscessus</name>
    <dbReference type="NCBI Taxonomy" id="561007"/>
    <lineage>
        <taxon>Bacteria</taxon>
        <taxon>Bacillati</taxon>
        <taxon>Actinomycetota</taxon>
        <taxon>Actinomycetes</taxon>
        <taxon>Mycobacteriales</taxon>
        <taxon>Mycobacteriaceae</taxon>
        <taxon>Mycobacteroides</taxon>
        <taxon>Mycobacteroides abscessus</taxon>
    </lineage>
</organism>
<dbReference type="EC" id="6.1.1.17" evidence="1"/>
<dbReference type="EMBL" id="CU458896">
    <property type="protein sequence ID" value="CAM63374.1"/>
    <property type="molecule type" value="Genomic_DNA"/>
</dbReference>
<dbReference type="RefSeq" id="WP_005081448.1">
    <property type="nucleotide sequence ID" value="NZ_MLCG01000001.1"/>
</dbReference>
<dbReference type="SMR" id="B1MDQ5"/>
<dbReference type="GeneID" id="93380232"/>
<dbReference type="KEGG" id="mab:MAB_3298c"/>
<dbReference type="Proteomes" id="UP000007137">
    <property type="component" value="Chromosome"/>
</dbReference>
<dbReference type="GO" id="GO:0005829">
    <property type="term" value="C:cytosol"/>
    <property type="evidence" value="ECO:0007669"/>
    <property type="project" value="TreeGrafter"/>
</dbReference>
<dbReference type="GO" id="GO:0005524">
    <property type="term" value="F:ATP binding"/>
    <property type="evidence" value="ECO:0007669"/>
    <property type="project" value="UniProtKB-UniRule"/>
</dbReference>
<dbReference type="GO" id="GO:0004818">
    <property type="term" value="F:glutamate-tRNA ligase activity"/>
    <property type="evidence" value="ECO:0007669"/>
    <property type="project" value="UniProtKB-UniRule"/>
</dbReference>
<dbReference type="GO" id="GO:0000049">
    <property type="term" value="F:tRNA binding"/>
    <property type="evidence" value="ECO:0007669"/>
    <property type="project" value="InterPro"/>
</dbReference>
<dbReference type="GO" id="GO:0008270">
    <property type="term" value="F:zinc ion binding"/>
    <property type="evidence" value="ECO:0007669"/>
    <property type="project" value="InterPro"/>
</dbReference>
<dbReference type="GO" id="GO:0006424">
    <property type="term" value="P:glutamyl-tRNA aminoacylation"/>
    <property type="evidence" value="ECO:0007669"/>
    <property type="project" value="UniProtKB-UniRule"/>
</dbReference>
<dbReference type="CDD" id="cd00808">
    <property type="entry name" value="GluRS_core"/>
    <property type="match status" value="1"/>
</dbReference>
<dbReference type="FunFam" id="3.40.50.620:FF:000149">
    <property type="entry name" value="Glutamate--tRNA ligase"/>
    <property type="match status" value="1"/>
</dbReference>
<dbReference type="Gene3D" id="1.10.10.350">
    <property type="match status" value="1"/>
</dbReference>
<dbReference type="Gene3D" id="1.10.8.70">
    <property type="entry name" value="Glutamate-tRNA synthetase, class I, anticodon-binding domain 1"/>
    <property type="match status" value="1"/>
</dbReference>
<dbReference type="Gene3D" id="1.10.1160.10">
    <property type="entry name" value="Glutamyl-trna Synthetase, Domain 2"/>
    <property type="match status" value="1"/>
</dbReference>
<dbReference type="Gene3D" id="3.90.800.10">
    <property type="entry name" value="Glutamyl-tRNA Synthetase, Domain 3"/>
    <property type="match status" value="1"/>
</dbReference>
<dbReference type="Gene3D" id="3.40.50.620">
    <property type="entry name" value="HUPs"/>
    <property type="match status" value="1"/>
</dbReference>
<dbReference type="HAMAP" id="MF_00022">
    <property type="entry name" value="Glu_tRNA_synth_type1"/>
    <property type="match status" value="1"/>
</dbReference>
<dbReference type="InterPro" id="IPR045462">
    <property type="entry name" value="aa-tRNA-synth_I_cd-bd"/>
</dbReference>
<dbReference type="InterPro" id="IPR020751">
    <property type="entry name" value="aa-tRNA-synth_I_codon-bd_sub2"/>
</dbReference>
<dbReference type="InterPro" id="IPR008925">
    <property type="entry name" value="aa_tRNA-synth_I_cd-bd_sf"/>
</dbReference>
<dbReference type="InterPro" id="IPR004527">
    <property type="entry name" value="Glu-tRNA-ligase_bac/mito"/>
</dbReference>
<dbReference type="InterPro" id="IPR020752">
    <property type="entry name" value="Glu-tRNA-synth_I_codon-bd_sub1"/>
</dbReference>
<dbReference type="InterPro" id="IPR000924">
    <property type="entry name" value="Glu/Gln-tRNA-synth"/>
</dbReference>
<dbReference type="InterPro" id="IPR020058">
    <property type="entry name" value="Glu/Gln-tRNA-synth_Ib_cat-dom"/>
</dbReference>
<dbReference type="InterPro" id="IPR020061">
    <property type="entry name" value="Glu_tRNA_lig_a-bdl"/>
</dbReference>
<dbReference type="InterPro" id="IPR049940">
    <property type="entry name" value="GluQ/Sye"/>
</dbReference>
<dbReference type="InterPro" id="IPR033910">
    <property type="entry name" value="GluRS_core"/>
</dbReference>
<dbReference type="InterPro" id="IPR014729">
    <property type="entry name" value="Rossmann-like_a/b/a_fold"/>
</dbReference>
<dbReference type="NCBIfam" id="TIGR00464">
    <property type="entry name" value="gltX_bact"/>
    <property type="match status" value="1"/>
</dbReference>
<dbReference type="PANTHER" id="PTHR43311">
    <property type="entry name" value="GLUTAMATE--TRNA LIGASE"/>
    <property type="match status" value="1"/>
</dbReference>
<dbReference type="PANTHER" id="PTHR43311:SF2">
    <property type="entry name" value="GLUTAMATE--TRNA LIGASE, MITOCHONDRIAL-RELATED"/>
    <property type="match status" value="1"/>
</dbReference>
<dbReference type="Pfam" id="PF19269">
    <property type="entry name" value="Anticodon_2"/>
    <property type="match status" value="1"/>
</dbReference>
<dbReference type="Pfam" id="PF00749">
    <property type="entry name" value="tRNA-synt_1c"/>
    <property type="match status" value="1"/>
</dbReference>
<dbReference type="PRINTS" id="PR00987">
    <property type="entry name" value="TRNASYNTHGLU"/>
</dbReference>
<dbReference type="SUPFAM" id="SSF48163">
    <property type="entry name" value="An anticodon-binding domain of class I aminoacyl-tRNA synthetases"/>
    <property type="match status" value="1"/>
</dbReference>
<dbReference type="SUPFAM" id="SSF52374">
    <property type="entry name" value="Nucleotidylyl transferase"/>
    <property type="match status" value="1"/>
</dbReference>
<protein>
    <recommendedName>
        <fullName evidence="1">Glutamate--tRNA ligase</fullName>
        <ecNumber evidence="1">6.1.1.17</ecNumber>
    </recommendedName>
    <alternativeName>
        <fullName evidence="1">Glutamyl-tRNA synthetase</fullName>
        <shortName evidence="1">GluRS</shortName>
    </alternativeName>
</protein>
<evidence type="ECO:0000255" key="1">
    <source>
        <dbReference type="HAMAP-Rule" id="MF_00022"/>
    </source>
</evidence>
<comment type="function">
    <text evidence="1">Catalyzes the attachment of glutamate to tRNA(Glu) in a two-step reaction: glutamate is first activated by ATP to form Glu-AMP and then transferred to the acceptor end of tRNA(Glu).</text>
</comment>
<comment type="catalytic activity">
    <reaction evidence="1">
        <text>tRNA(Glu) + L-glutamate + ATP = L-glutamyl-tRNA(Glu) + AMP + diphosphate</text>
        <dbReference type="Rhea" id="RHEA:23540"/>
        <dbReference type="Rhea" id="RHEA-COMP:9663"/>
        <dbReference type="Rhea" id="RHEA-COMP:9680"/>
        <dbReference type="ChEBI" id="CHEBI:29985"/>
        <dbReference type="ChEBI" id="CHEBI:30616"/>
        <dbReference type="ChEBI" id="CHEBI:33019"/>
        <dbReference type="ChEBI" id="CHEBI:78442"/>
        <dbReference type="ChEBI" id="CHEBI:78520"/>
        <dbReference type="ChEBI" id="CHEBI:456215"/>
        <dbReference type="EC" id="6.1.1.17"/>
    </reaction>
</comment>
<comment type="subunit">
    <text evidence="1">Monomer.</text>
</comment>
<comment type="subcellular location">
    <subcellularLocation>
        <location evidence="1">Cytoplasm</location>
    </subcellularLocation>
</comment>
<comment type="similarity">
    <text evidence="1">Belongs to the class-I aminoacyl-tRNA synthetase family. Glutamate--tRNA ligase type 1 subfamily.</text>
</comment>
<reference key="1">
    <citation type="journal article" date="2009" name="PLoS ONE">
        <title>Non mycobacterial virulence genes in the genome of the emerging pathogen Mycobacterium abscessus.</title>
        <authorList>
            <person name="Ripoll F."/>
            <person name="Pasek S."/>
            <person name="Schenowitz C."/>
            <person name="Dossat C."/>
            <person name="Barbe V."/>
            <person name="Rottman M."/>
            <person name="Macheras E."/>
            <person name="Heym B."/>
            <person name="Herrmann J.L."/>
            <person name="Daffe M."/>
            <person name="Brosch R."/>
            <person name="Risler J.L."/>
            <person name="Gaillard J.L."/>
        </authorList>
    </citation>
    <scope>NUCLEOTIDE SEQUENCE [LARGE SCALE GENOMIC DNA]</scope>
    <source>
        <strain>ATCC 19977 / DSM 44196 / CCUG 20993 / CIP 104536 / JCM 13569 / NCTC 13031 / TMC 1543 / L948</strain>
    </source>
</reference>
<name>SYE_MYCA9</name>
<gene>
    <name evidence="1" type="primary">gltX</name>
    <name type="ordered locus">MAB_3298c</name>
</gene>
<accession>B1MDQ5</accession>